<proteinExistence type="evidence at transcript level"/>
<organism>
    <name type="scientific">Dictyostelium discoideum</name>
    <name type="common">Social amoeba</name>
    <dbReference type="NCBI Taxonomy" id="44689"/>
    <lineage>
        <taxon>Eukaryota</taxon>
        <taxon>Amoebozoa</taxon>
        <taxon>Evosea</taxon>
        <taxon>Eumycetozoa</taxon>
        <taxon>Dictyostelia</taxon>
        <taxon>Dictyosteliales</taxon>
        <taxon>Dictyosteliaceae</taxon>
        <taxon>Dictyostelium</taxon>
    </lineage>
</organism>
<gene>
    <name type="primary">D2</name>
    <name type="ORF">DDB_G0283085</name>
</gene>
<protein>
    <recommendedName>
        <fullName>cAMP-regulated D2 protein</fullName>
    </recommendedName>
</protein>
<keyword id="KW-0114">cAMP</keyword>
<keyword id="KW-0968">Cytoplasmic vesicle</keyword>
<keyword id="KW-1015">Disulfide bond</keyword>
<keyword id="KW-0325">Glycoprotein</keyword>
<keyword id="KW-0378">Hydrolase</keyword>
<keyword id="KW-0472">Membrane</keyword>
<keyword id="KW-1185">Reference proteome</keyword>
<keyword id="KW-0719">Serine esterase</keyword>
<keyword id="KW-0732">Signal</keyword>
<sequence>MNKLLVFILLLLLLINISFARKRSYIKNTDASIVVTQFGAIKGIVEDTHRVFYGVPFAQPPVNQLRWENPIDLKPWENVRETLTQKSQCAQKCNLGPGVCSPIGTSEDCLYLDVFTPKDATPNSKYPVIVYIPGGAFSVGSGSVPLYDATKFAQSSVIVVNINYRLGVLGFMGTDLMHGNYGFLDQIKALEWVYNNIGSFGGNKEMITIWGESAGAFSVSAHLTSTYSRQYFNAAISSSSPLTVGLKDKTTARGNANRFATNVGCNIEDLTCLRGKSMDEILDAQEKVGLTFGDKILDAFTIWSPVIDGDIIPMQPLTAVKEGKTYDVPTIIGNVKHEAIPFIYSFFQDSVGIDYYRVLVAIVFPLNAMKILPLYPAAPRGQDSRPILSELITDYLFRCPDRYHTVTNAKKLSSPTYHYHYVHVKSTGHSLDACDDKVCHGTELSLFFNSYELMGERLDNDEKELAIDINNYIVNFATTHNPNTGLDVPVQWRQVTSTQNSTLILETTIETKDTFTNDPKCNALDLTYYRNQVRP</sequence>
<evidence type="ECO:0000250" key="1"/>
<evidence type="ECO:0000255" key="2"/>
<evidence type="ECO:0000255" key="3">
    <source>
        <dbReference type="PROSITE-ProRule" id="PRU10039"/>
    </source>
</evidence>
<evidence type="ECO:0000305" key="4"/>
<comment type="subcellular location">
    <subcellularLocation>
        <location>Cytoplasmic vesicle</location>
        <location>Esterosome membrane</location>
    </subcellularLocation>
    <text>Membrane-enclosed crystals (esterosome).</text>
</comment>
<comment type="developmental stage">
    <text>Crystals accumulates between growth and aggregation stage and disappear only after the spore germination.</text>
</comment>
<comment type="induction">
    <text>Expression is strongly stimulated by periodic pulses of cAMP.</text>
</comment>
<comment type="similarity">
    <text evidence="4">Belongs to the type-B carboxylesterase/lipase family.</text>
</comment>
<accession>P18142</accession>
<accession>Q54RI7</accession>
<reference key="1">
    <citation type="journal article" date="1990" name="J. Cell Biol.">
        <title>Membrane-enclosed crystals in Dictyostelium discoideum cells, consisting of developmentally regulated proteins with sequence similarities to known esterases.</title>
        <authorList>
            <person name="Bomblies L."/>
            <person name="Biegelmann E."/>
            <person name="Doering V."/>
            <person name="Gerisch G."/>
            <person name="Krafft-Czepa H."/>
            <person name="Noegel A.A."/>
            <person name="Schleicher M."/>
            <person name="Humbel B.M."/>
        </authorList>
    </citation>
    <scope>NUCLEOTIDE SEQUENCE [GENOMIC DNA]</scope>
    <source>
        <strain>AX3</strain>
    </source>
</reference>
<reference key="2">
    <citation type="journal article" date="2005" name="Nature">
        <title>The genome of the social amoeba Dictyostelium discoideum.</title>
        <authorList>
            <person name="Eichinger L."/>
            <person name="Pachebat J.A."/>
            <person name="Gloeckner G."/>
            <person name="Rajandream M.A."/>
            <person name="Sucgang R."/>
            <person name="Berriman M."/>
            <person name="Song J."/>
            <person name="Olsen R."/>
            <person name="Szafranski K."/>
            <person name="Xu Q."/>
            <person name="Tunggal B."/>
            <person name="Kummerfeld S."/>
            <person name="Madera M."/>
            <person name="Konfortov B.A."/>
            <person name="Rivero F."/>
            <person name="Bankier A.T."/>
            <person name="Lehmann R."/>
            <person name="Hamlin N."/>
            <person name="Davies R."/>
            <person name="Gaudet P."/>
            <person name="Fey P."/>
            <person name="Pilcher K."/>
            <person name="Chen G."/>
            <person name="Saunders D."/>
            <person name="Sodergren E.J."/>
            <person name="Davis P."/>
            <person name="Kerhornou A."/>
            <person name="Nie X."/>
            <person name="Hall N."/>
            <person name="Anjard C."/>
            <person name="Hemphill L."/>
            <person name="Bason N."/>
            <person name="Farbrother P."/>
            <person name="Desany B."/>
            <person name="Just E."/>
            <person name="Morio T."/>
            <person name="Rost R."/>
            <person name="Churcher C.M."/>
            <person name="Cooper J."/>
            <person name="Haydock S."/>
            <person name="van Driessche N."/>
            <person name="Cronin A."/>
            <person name="Goodhead I."/>
            <person name="Muzny D.M."/>
            <person name="Mourier T."/>
            <person name="Pain A."/>
            <person name="Lu M."/>
            <person name="Harper D."/>
            <person name="Lindsay R."/>
            <person name="Hauser H."/>
            <person name="James K.D."/>
            <person name="Quiles M."/>
            <person name="Madan Babu M."/>
            <person name="Saito T."/>
            <person name="Buchrieser C."/>
            <person name="Wardroper A."/>
            <person name="Felder M."/>
            <person name="Thangavelu M."/>
            <person name="Johnson D."/>
            <person name="Knights A."/>
            <person name="Loulseged H."/>
            <person name="Mungall K.L."/>
            <person name="Oliver K."/>
            <person name="Price C."/>
            <person name="Quail M.A."/>
            <person name="Urushihara H."/>
            <person name="Hernandez J."/>
            <person name="Rabbinowitsch E."/>
            <person name="Steffen D."/>
            <person name="Sanders M."/>
            <person name="Ma J."/>
            <person name="Kohara Y."/>
            <person name="Sharp S."/>
            <person name="Simmonds M.N."/>
            <person name="Spiegler S."/>
            <person name="Tivey A."/>
            <person name="Sugano S."/>
            <person name="White B."/>
            <person name="Walker D."/>
            <person name="Woodward J.R."/>
            <person name="Winckler T."/>
            <person name="Tanaka Y."/>
            <person name="Shaulsky G."/>
            <person name="Schleicher M."/>
            <person name="Weinstock G.M."/>
            <person name="Rosenthal A."/>
            <person name="Cox E.C."/>
            <person name="Chisholm R.L."/>
            <person name="Gibbs R.A."/>
            <person name="Loomis W.F."/>
            <person name="Platzer M."/>
            <person name="Kay R.R."/>
            <person name="Williams J.G."/>
            <person name="Dear P.H."/>
            <person name="Noegel A.A."/>
            <person name="Barrell B.G."/>
            <person name="Kuspa A."/>
        </authorList>
    </citation>
    <scope>NUCLEOTIDE SEQUENCE [LARGE SCALE GENOMIC DNA]</scope>
    <source>
        <strain>AX4</strain>
    </source>
</reference>
<reference key="3">
    <citation type="journal article" date="1987" name="Mol. Cell. Biol.">
        <title>Cyclic AMP regulation of early gene expression in Dictyostelium discoideum: mediation via the cell surface cyclic AMP receptor.</title>
        <authorList>
            <person name="Mann S.K.O."/>
            <person name="Firtel R.A."/>
        </authorList>
    </citation>
    <scope>PRELIMINARY PARTIAL NUCLEOTIDE SEQUENCE</scope>
</reference>
<feature type="signal peptide" evidence="2">
    <location>
        <begin position="1"/>
        <end position="20"/>
    </location>
</feature>
<feature type="chain" id="PRO_0000008617" description="cAMP-regulated D2 protein">
    <location>
        <begin position="21"/>
        <end position="535"/>
    </location>
</feature>
<feature type="active site" description="Acyl-ester intermediate" evidence="3">
    <location>
        <position position="213"/>
    </location>
</feature>
<feature type="active site" description="Charge relay system" evidence="1">
    <location>
        <position position="338"/>
    </location>
</feature>
<feature type="active site" description="Charge relay system" evidence="1">
    <location>
        <position position="440"/>
    </location>
</feature>
<feature type="glycosylation site" description="N-linked (GlcNAc...) asparagine" evidence="2">
    <location>
        <position position="500"/>
    </location>
</feature>
<feature type="disulfide bond" evidence="1">
    <location>
        <begin position="89"/>
        <end position="109"/>
    </location>
</feature>
<feature type="disulfide bond" evidence="1">
    <location>
        <begin position="265"/>
        <end position="272"/>
    </location>
</feature>
<feature type="sequence conflict" description="In Ref. 1; CAA36703." evidence="4" ref="1">
    <original>V</original>
    <variation>I</variation>
    <location>
        <position position="55"/>
    </location>
</feature>
<feature type="sequence conflict" description="In Ref. 1; CAA36703." evidence="4" ref="1">
    <original>S</original>
    <variation>F</variation>
    <location>
        <position position="225"/>
    </location>
</feature>
<feature type="sequence conflict" description="In Ref. 1; CAA36703." evidence="4" ref="1">
    <original>D</original>
    <variation>S</variation>
    <location>
        <position position="487"/>
    </location>
</feature>
<name>D2_DICDI</name>
<dbReference type="EMBL" id="X52465">
    <property type="protein sequence ID" value="CAA36703.1"/>
    <property type="molecule type" value="Genomic_DNA"/>
</dbReference>
<dbReference type="EMBL" id="AAFI02000050">
    <property type="protein sequence ID" value="EAL65872.1"/>
    <property type="molecule type" value="Genomic_DNA"/>
</dbReference>
<dbReference type="EMBL" id="M15966">
    <property type="protein sequence ID" value="AAA33182.1"/>
    <property type="status" value="ALT_SEQ"/>
    <property type="molecule type" value="Genomic_DNA"/>
</dbReference>
<dbReference type="EMBL" id="M15969">
    <property type="protein sequence ID" value="AAA33183.1"/>
    <property type="status" value="ALT_SEQ"/>
    <property type="molecule type" value="Genomic_DNA"/>
</dbReference>
<dbReference type="EMBL" id="M15970">
    <property type="protein sequence ID" value="AAA33184.1"/>
    <property type="status" value="ALT_SEQ"/>
    <property type="molecule type" value="Genomic_DNA"/>
</dbReference>
<dbReference type="EMBL" id="M21592">
    <property type="protein sequence ID" value="AAA33185.1"/>
    <property type="status" value="ALT_SEQ"/>
    <property type="molecule type" value="Genomic_DNA"/>
</dbReference>
<dbReference type="PIR" id="B34576">
    <property type="entry name" value="B34576"/>
</dbReference>
<dbReference type="PIR" id="C26720">
    <property type="entry name" value="C26720"/>
</dbReference>
<dbReference type="RefSeq" id="XP_639249.1">
    <property type="nucleotide sequence ID" value="XM_634157.1"/>
</dbReference>
<dbReference type="SMR" id="P18142"/>
<dbReference type="FunCoup" id="P18142">
    <property type="interactions" value="7"/>
</dbReference>
<dbReference type="STRING" id="44689.P18142"/>
<dbReference type="ESTHER" id="dicdi-crd2p">
    <property type="family name" value="Cholinesterase-like"/>
</dbReference>
<dbReference type="GlyCosmos" id="P18142">
    <property type="glycosylation" value="1 site, No reported glycans"/>
</dbReference>
<dbReference type="GlyGen" id="P18142">
    <property type="glycosylation" value="1 site"/>
</dbReference>
<dbReference type="PaxDb" id="44689-DDB0220022"/>
<dbReference type="EnsemblProtists" id="EAL65872">
    <property type="protein sequence ID" value="EAL65872"/>
    <property type="gene ID" value="DDB_G0283085"/>
</dbReference>
<dbReference type="GeneID" id="8623935"/>
<dbReference type="KEGG" id="ddi:DDB_G0283085"/>
<dbReference type="dictyBase" id="DDB_G0283085">
    <property type="gene designation" value="D2"/>
</dbReference>
<dbReference type="VEuPathDB" id="AmoebaDB:DDB_G0283085"/>
<dbReference type="eggNOG" id="KOG1516">
    <property type="taxonomic scope" value="Eukaryota"/>
</dbReference>
<dbReference type="HOGENOM" id="CLU_006586_13_0_1"/>
<dbReference type="InParanoid" id="P18142"/>
<dbReference type="OMA" id="SIAHHIM"/>
<dbReference type="PhylomeDB" id="P18142"/>
<dbReference type="Reactome" id="R-DDI-112311">
    <property type="pathway name" value="Neurotransmitter clearance"/>
</dbReference>
<dbReference type="Reactome" id="R-DDI-1483191">
    <property type="pathway name" value="Synthesis of PC"/>
</dbReference>
<dbReference type="Reactome" id="R-DDI-2022377">
    <property type="pathway name" value="Metabolism of Angiotensinogen to Angiotensins"/>
</dbReference>
<dbReference type="Reactome" id="R-DDI-211945">
    <property type="pathway name" value="Phase I - Functionalization of compounds"/>
</dbReference>
<dbReference type="Reactome" id="R-DDI-5578768">
    <property type="pathway name" value="Physiological factors"/>
</dbReference>
<dbReference type="Reactome" id="R-DDI-9749641">
    <property type="pathway name" value="Aspirin ADME"/>
</dbReference>
<dbReference type="PRO" id="PR:P18142"/>
<dbReference type="Proteomes" id="UP000002195">
    <property type="component" value="Chromosome 4"/>
</dbReference>
<dbReference type="GO" id="GO:0005938">
    <property type="term" value="C:cell cortex"/>
    <property type="evidence" value="ECO:0000314"/>
    <property type="project" value="dictyBase"/>
</dbReference>
<dbReference type="GO" id="GO:0033118">
    <property type="term" value="C:esterosome membrane"/>
    <property type="evidence" value="ECO:0007669"/>
    <property type="project" value="UniProtKB-SubCell"/>
</dbReference>
<dbReference type="GO" id="GO:0052689">
    <property type="term" value="F:carboxylic ester hydrolase activity"/>
    <property type="evidence" value="ECO:0007669"/>
    <property type="project" value="UniProtKB-KW"/>
</dbReference>
<dbReference type="CDD" id="cd00312">
    <property type="entry name" value="Esterase_lipase"/>
    <property type="match status" value="1"/>
</dbReference>
<dbReference type="FunFam" id="3.40.50.1820:FF:000293">
    <property type="entry name" value="Carboxylic ester hydrolase"/>
    <property type="match status" value="1"/>
</dbReference>
<dbReference type="Gene3D" id="3.40.50.1820">
    <property type="entry name" value="alpha/beta hydrolase"/>
    <property type="match status" value="1"/>
</dbReference>
<dbReference type="InterPro" id="IPR029058">
    <property type="entry name" value="AB_hydrolase_fold"/>
</dbReference>
<dbReference type="InterPro" id="IPR002018">
    <property type="entry name" value="CarbesteraseB"/>
</dbReference>
<dbReference type="InterPro" id="IPR019826">
    <property type="entry name" value="Carboxylesterase_B_AS"/>
</dbReference>
<dbReference type="InterPro" id="IPR019819">
    <property type="entry name" value="Carboxylesterase_B_CS"/>
</dbReference>
<dbReference type="PANTHER" id="PTHR45570">
    <property type="entry name" value="CARBOXYLIC ESTER HYDROLASE"/>
    <property type="match status" value="1"/>
</dbReference>
<dbReference type="PANTHER" id="PTHR45570:SF1">
    <property type="entry name" value="CARBOXYLIC ESTER HYDROLASE"/>
    <property type="match status" value="1"/>
</dbReference>
<dbReference type="Pfam" id="PF00135">
    <property type="entry name" value="COesterase"/>
    <property type="match status" value="1"/>
</dbReference>
<dbReference type="SUPFAM" id="SSF53474">
    <property type="entry name" value="alpha/beta-Hydrolases"/>
    <property type="match status" value="1"/>
</dbReference>
<dbReference type="PROSITE" id="PS00122">
    <property type="entry name" value="CARBOXYLESTERASE_B_1"/>
    <property type="match status" value="1"/>
</dbReference>
<dbReference type="PROSITE" id="PS00941">
    <property type="entry name" value="CARBOXYLESTERASE_B_2"/>
    <property type="match status" value="1"/>
</dbReference>